<feature type="chain" id="PRO_0000132047" description="Large ribosomal subunit protein eL14">
    <location>
        <begin position="1"/>
        <end position="94"/>
    </location>
</feature>
<comment type="similarity">
    <text evidence="1">Belongs to the eukaryotic ribosomal protein eL14 family.</text>
</comment>
<accession>Q8TX43</accession>
<sequence>MPAPIEVGRICVKTAGREAGKYCVVVDIVDENFVIITGPKDVTGVKRRRCNIKHLEPTPEKVDIDRGASDEEVKEALEEAGLLDLMKEGIVSGS</sequence>
<protein>
    <recommendedName>
        <fullName evidence="1">Large ribosomal subunit protein eL14</fullName>
    </recommendedName>
    <alternativeName>
        <fullName evidence="2">50S ribosomal protein L14e</fullName>
    </alternativeName>
</protein>
<reference key="1">
    <citation type="journal article" date="2002" name="Proc. Natl. Acad. Sci. U.S.A.">
        <title>The complete genome of hyperthermophile Methanopyrus kandleri AV19 and monophyly of archaeal methanogens.</title>
        <authorList>
            <person name="Slesarev A.I."/>
            <person name="Mezhevaya K.V."/>
            <person name="Makarova K.S."/>
            <person name="Polushin N.N."/>
            <person name="Shcherbinina O.V."/>
            <person name="Shakhova V.V."/>
            <person name="Belova G.I."/>
            <person name="Aravind L."/>
            <person name="Natale D.A."/>
            <person name="Rogozin I.B."/>
            <person name="Tatusov R.L."/>
            <person name="Wolf Y.I."/>
            <person name="Stetter K.O."/>
            <person name="Malykh A.G."/>
            <person name="Koonin E.V."/>
            <person name="Kozyavkin S.A."/>
        </authorList>
    </citation>
    <scope>NUCLEOTIDE SEQUENCE [LARGE SCALE GENOMIC DNA]</scope>
    <source>
        <strain>AV19 / DSM 6324 / JCM 9639 / NBRC 100938</strain>
    </source>
</reference>
<gene>
    <name evidence="1" type="primary">rpl14e</name>
    <name type="synonym">rpl14a</name>
    <name type="ordered locus">MK0833</name>
</gene>
<organism>
    <name type="scientific">Methanopyrus kandleri (strain AV19 / DSM 6324 / JCM 9639 / NBRC 100938)</name>
    <dbReference type="NCBI Taxonomy" id="190192"/>
    <lineage>
        <taxon>Archaea</taxon>
        <taxon>Methanobacteriati</taxon>
        <taxon>Methanobacteriota</taxon>
        <taxon>Methanomada group</taxon>
        <taxon>Methanopyri</taxon>
        <taxon>Methanopyrales</taxon>
        <taxon>Methanopyraceae</taxon>
        <taxon>Methanopyrus</taxon>
    </lineage>
</organism>
<proteinExistence type="inferred from homology"/>
<dbReference type="EMBL" id="AE009439">
    <property type="protein sequence ID" value="AAM02046.1"/>
    <property type="molecule type" value="Genomic_DNA"/>
</dbReference>
<dbReference type="RefSeq" id="WP_011019201.1">
    <property type="nucleotide sequence ID" value="NC_003551.1"/>
</dbReference>
<dbReference type="SMR" id="Q8TX43"/>
<dbReference type="FunCoup" id="Q8TX43">
    <property type="interactions" value="116"/>
</dbReference>
<dbReference type="STRING" id="190192.MK0833"/>
<dbReference type="PaxDb" id="190192-MK0833"/>
<dbReference type="EnsemblBacteria" id="AAM02046">
    <property type="protein sequence ID" value="AAM02046"/>
    <property type="gene ID" value="MK0833"/>
</dbReference>
<dbReference type="GeneID" id="1476934"/>
<dbReference type="KEGG" id="mka:MK0833"/>
<dbReference type="PATRIC" id="fig|190192.8.peg.876"/>
<dbReference type="HOGENOM" id="CLU_183474_0_0_2"/>
<dbReference type="InParanoid" id="Q8TX43"/>
<dbReference type="OrthoDB" id="63594at2157"/>
<dbReference type="Proteomes" id="UP000001826">
    <property type="component" value="Chromosome"/>
</dbReference>
<dbReference type="GO" id="GO:0022625">
    <property type="term" value="C:cytosolic large ribosomal subunit"/>
    <property type="evidence" value="ECO:0007669"/>
    <property type="project" value="TreeGrafter"/>
</dbReference>
<dbReference type="GO" id="GO:0003723">
    <property type="term" value="F:RNA binding"/>
    <property type="evidence" value="ECO:0007669"/>
    <property type="project" value="InterPro"/>
</dbReference>
<dbReference type="GO" id="GO:0003735">
    <property type="term" value="F:structural constituent of ribosome"/>
    <property type="evidence" value="ECO:0007669"/>
    <property type="project" value="InterPro"/>
</dbReference>
<dbReference type="GO" id="GO:0042273">
    <property type="term" value="P:ribosomal large subunit biogenesis"/>
    <property type="evidence" value="ECO:0007669"/>
    <property type="project" value="TreeGrafter"/>
</dbReference>
<dbReference type="GO" id="GO:0006412">
    <property type="term" value="P:translation"/>
    <property type="evidence" value="ECO:0007669"/>
    <property type="project" value="UniProtKB-UniRule"/>
</dbReference>
<dbReference type="CDD" id="cd06088">
    <property type="entry name" value="KOW_RPL14"/>
    <property type="match status" value="1"/>
</dbReference>
<dbReference type="FunFam" id="2.30.30.30:FF:000045">
    <property type="entry name" value="50S ribosomal protein L14e"/>
    <property type="match status" value="1"/>
</dbReference>
<dbReference type="Gene3D" id="2.30.30.30">
    <property type="match status" value="1"/>
</dbReference>
<dbReference type="HAMAP" id="MF_00721">
    <property type="entry name" value="Ribosomal_eL14"/>
    <property type="match status" value="1"/>
</dbReference>
<dbReference type="InterPro" id="IPR005824">
    <property type="entry name" value="KOW"/>
</dbReference>
<dbReference type="InterPro" id="IPR014722">
    <property type="entry name" value="Rib_uL2_dom2"/>
</dbReference>
<dbReference type="InterPro" id="IPR039660">
    <property type="entry name" value="Ribosomal_eL14"/>
</dbReference>
<dbReference type="InterPro" id="IPR023651">
    <property type="entry name" value="Ribosomal_eL14_arc"/>
</dbReference>
<dbReference type="InterPro" id="IPR041985">
    <property type="entry name" value="Ribosomal_eL14_KOW"/>
</dbReference>
<dbReference type="InterPro" id="IPR008991">
    <property type="entry name" value="Translation_prot_SH3-like_sf"/>
</dbReference>
<dbReference type="NCBIfam" id="NF003320">
    <property type="entry name" value="PRK04333.1"/>
    <property type="match status" value="1"/>
</dbReference>
<dbReference type="PANTHER" id="PTHR11127">
    <property type="entry name" value="60S RIBOSOMAL PROTEIN L14"/>
    <property type="match status" value="1"/>
</dbReference>
<dbReference type="PANTHER" id="PTHR11127:SF2">
    <property type="entry name" value="LARGE RIBOSOMAL SUBUNIT PROTEIN EL14"/>
    <property type="match status" value="1"/>
</dbReference>
<dbReference type="Pfam" id="PF00467">
    <property type="entry name" value="KOW"/>
    <property type="match status" value="1"/>
</dbReference>
<dbReference type="SUPFAM" id="SSF50104">
    <property type="entry name" value="Translation proteins SH3-like domain"/>
    <property type="match status" value="1"/>
</dbReference>
<name>RL14E_METKA</name>
<evidence type="ECO:0000255" key="1">
    <source>
        <dbReference type="HAMAP-Rule" id="MF_00721"/>
    </source>
</evidence>
<evidence type="ECO:0000305" key="2"/>
<keyword id="KW-1185">Reference proteome</keyword>
<keyword id="KW-0687">Ribonucleoprotein</keyword>
<keyword id="KW-0689">Ribosomal protein</keyword>